<gene>
    <name type="primary">Rala</name>
    <name type="synonym">Ral</name>
    <name type="synonym">Ral-a</name>
</gene>
<sequence>MAANKPKGQNSLALHKVIMVGSGGVGKSALTLQFMYDEFVEDYEPTKADSYRKKVVLDGEEVQIDILDTAGQEDYAAIRDNYFRSGEGFLCVFSITEMESFAATADFREQILRVKEDENVPFLLVGNKSDLEDKRQVSVEEAKNRADQWNVNYVETSAKTRANVDKVFFDLMREIRARKMEDSKEKNGKKKRKSLAKRIRERCCIL</sequence>
<accession>P63322</accession>
<accession>P05810</accession>
<protein>
    <recommendedName>
        <fullName>Ras-related protein Ral-A</fullName>
        <ecNumber evidence="2">3.6.5.2</ecNumber>
    </recommendedName>
</protein>
<name>RALA_RAT</name>
<feature type="chain" id="PRO_0000082695" description="Ras-related protein Ral-A">
    <location>
        <begin position="1"/>
        <end position="203"/>
    </location>
</feature>
<feature type="propeptide" id="PRO_0000281346" description="Removed in mature form" evidence="1">
    <location>
        <begin position="204"/>
        <end position="206"/>
    </location>
</feature>
<feature type="short sequence motif" description="Effector region">
    <location>
        <begin position="43"/>
        <end position="51"/>
    </location>
</feature>
<feature type="binding site" evidence="1">
    <location>
        <begin position="21"/>
        <end position="28"/>
    </location>
    <ligand>
        <name>GTP</name>
        <dbReference type="ChEBI" id="CHEBI:37565"/>
    </ligand>
</feature>
<feature type="binding site" evidence="1">
    <location>
        <begin position="68"/>
        <end position="72"/>
    </location>
    <ligand>
        <name>GTP</name>
        <dbReference type="ChEBI" id="CHEBI:37565"/>
    </ligand>
</feature>
<feature type="binding site" evidence="1">
    <location>
        <begin position="127"/>
        <end position="130"/>
    </location>
    <ligand>
        <name>GTP</name>
        <dbReference type="ChEBI" id="CHEBI:37565"/>
    </ligand>
</feature>
<feature type="modified residue" description="Phosphoserine" evidence="2">
    <location>
        <position position="194"/>
    </location>
</feature>
<feature type="modified residue" description="Cysteine methyl ester" evidence="1">
    <location>
        <position position="203"/>
    </location>
</feature>
<feature type="lipid moiety-binding region" description="S-geranylgeranyl cysteine" evidence="1">
    <location>
        <position position="203"/>
    </location>
</feature>
<feature type="mutagenesis site" description="Loss of RALBP1 binding." evidence="4">
    <original>D</original>
    <variation>N</variation>
    <location>
        <position position="49"/>
    </location>
</feature>
<dbReference type="EC" id="3.6.5.2" evidence="2"/>
<dbReference type="EMBL" id="L19698">
    <property type="protein sequence ID" value="AAA42003.1"/>
    <property type="molecule type" value="mRNA"/>
</dbReference>
<dbReference type="PIR" id="JN0622">
    <property type="entry name" value="JN0622"/>
</dbReference>
<dbReference type="RefSeq" id="NP_001401109.1">
    <property type="nucleotide sequence ID" value="NM_001414180.2"/>
</dbReference>
<dbReference type="RefSeq" id="NP_112355.1">
    <property type="nucleotide sequence ID" value="NM_031093.4"/>
</dbReference>
<dbReference type="RefSeq" id="XP_006254055.1">
    <property type="nucleotide sequence ID" value="XM_006253993.3"/>
</dbReference>
<dbReference type="RefSeq" id="XP_017456153.1">
    <property type="nucleotide sequence ID" value="XM_017600664.1"/>
</dbReference>
<dbReference type="RefSeq" id="XP_017456154.1">
    <property type="nucleotide sequence ID" value="XM_017600665.1"/>
</dbReference>
<dbReference type="RefSeq" id="XP_038952038.1">
    <property type="nucleotide sequence ID" value="XM_039096110.2"/>
</dbReference>
<dbReference type="RefSeq" id="XP_038952040.1">
    <property type="nucleotide sequence ID" value="XM_039096112.2"/>
</dbReference>
<dbReference type="SMR" id="P63322"/>
<dbReference type="BioGRID" id="249629">
    <property type="interactions" value="5"/>
</dbReference>
<dbReference type="FunCoup" id="P63322">
    <property type="interactions" value="3951"/>
</dbReference>
<dbReference type="IntAct" id="P63322">
    <property type="interactions" value="1"/>
</dbReference>
<dbReference type="STRING" id="10116.ENSRNOP00000018190"/>
<dbReference type="iPTMnet" id="P63322"/>
<dbReference type="PhosphoSitePlus" id="P63322"/>
<dbReference type="SwissPalm" id="P63322"/>
<dbReference type="PaxDb" id="10116-ENSRNOP00000018190"/>
<dbReference type="Ensembl" id="ENSRNOT00000102020.1">
    <property type="protein sequence ID" value="ENSRNOP00000090376.1"/>
    <property type="gene ID" value="ENSRNOG00000013454.5"/>
</dbReference>
<dbReference type="GeneID" id="81757"/>
<dbReference type="KEGG" id="rno:81757"/>
<dbReference type="UCSC" id="RGD:619851">
    <property type="organism name" value="rat"/>
</dbReference>
<dbReference type="AGR" id="RGD:619851"/>
<dbReference type="CTD" id="5898"/>
<dbReference type="RGD" id="619851">
    <property type="gene designation" value="Rala"/>
</dbReference>
<dbReference type="eggNOG" id="KOG0395">
    <property type="taxonomic scope" value="Eukaryota"/>
</dbReference>
<dbReference type="GeneTree" id="ENSGT00940000155142"/>
<dbReference type="HOGENOM" id="CLU_041217_9_8_1"/>
<dbReference type="InParanoid" id="P63322"/>
<dbReference type="OMA" id="LASEWHC"/>
<dbReference type="OrthoDB" id="5976022at2759"/>
<dbReference type="PhylomeDB" id="P63322"/>
<dbReference type="TreeFam" id="TF312796"/>
<dbReference type="PRO" id="PR:P63322"/>
<dbReference type="Proteomes" id="UP000002494">
    <property type="component" value="Chromosome 17"/>
</dbReference>
<dbReference type="Bgee" id="ENSRNOG00000013454">
    <property type="expression patterns" value="Expressed in heart and 20 other cell types or tissues"/>
</dbReference>
<dbReference type="GO" id="GO:0009986">
    <property type="term" value="C:cell surface"/>
    <property type="evidence" value="ECO:0000266"/>
    <property type="project" value="RGD"/>
</dbReference>
<dbReference type="GO" id="GO:0032154">
    <property type="term" value="C:cleavage furrow"/>
    <property type="evidence" value="ECO:0000250"/>
    <property type="project" value="UniProtKB"/>
</dbReference>
<dbReference type="GO" id="GO:0005829">
    <property type="term" value="C:cytosol"/>
    <property type="evidence" value="ECO:0000304"/>
    <property type="project" value="Reactome"/>
</dbReference>
<dbReference type="GO" id="GO:0030139">
    <property type="term" value="C:endocytic vesicle"/>
    <property type="evidence" value="ECO:0000266"/>
    <property type="project" value="RGD"/>
</dbReference>
<dbReference type="GO" id="GO:0090543">
    <property type="term" value="C:Flemming body"/>
    <property type="evidence" value="ECO:0007669"/>
    <property type="project" value="UniProtKB-SubCell"/>
</dbReference>
<dbReference type="GO" id="GO:0005925">
    <property type="term" value="C:focal adhesion"/>
    <property type="evidence" value="ECO:0007669"/>
    <property type="project" value="Ensembl"/>
</dbReference>
<dbReference type="GO" id="GO:0005739">
    <property type="term" value="C:mitochondrion"/>
    <property type="evidence" value="ECO:0000250"/>
    <property type="project" value="UniProtKB"/>
</dbReference>
<dbReference type="GO" id="GO:0005886">
    <property type="term" value="C:plasma membrane"/>
    <property type="evidence" value="ECO:0000250"/>
    <property type="project" value="UniProtKB"/>
</dbReference>
<dbReference type="GO" id="GO:0098685">
    <property type="term" value="C:Schaffer collateral - CA1 synapse"/>
    <property type="evidence" value="ECO:0000314"/>
    <property type="project" value="SynGO"/>
</dbReference>
<dbReference type="GO" id="GO:0097060">
    <property type="term" value="C:synaptic membrane"/>
    <property type="evidence" value="ECO:0000314"/>
    <property type="project" value="SynGO"/>
</dbReference>
<dbReference type="GO" id="GO:0051117">
    <property type="term" value="F:ATPase binding"/>
    <property type="evidence" value="ECO:0000266"/>
    <property type="project" value="RGD"/>
</dbReference>
<dbReference type="GO" id="GO:0031755">
    <property type="term" value="F:Edg-2 lysophosphatidic acid receptor binding"/>
    <property type="evidence" value="ECO:0000250"/>
    <property type="project" value="UniProtKB"/>
</dbReference>
<dbReference type="GO" id="GO:0003925">
    <property type="term" value="F:G protein activity"/>
    <property type="evidence" value="ECO:0007669"/>
    <property type="project" value="UniProtKB-EC"/>
</dbReference>
<dbReference type="GO" id="GO:0019003">
    <property type="term" value="F:GDP binding"/>
    <property type="evidence" value="ECO:0000266"/>
    <property type="project" value="RGD"/>
</dbReference>
<dbReference type="GO" id="GO:0005525">
    <property type="term" value="F:GTP binding"/>
    <property type="evidence" value="ECO:0000266"/>
    <property type="project" value="RGD"/>
</dbReference>
<dbReference type="GO" id="GO:0003924">
    <property type="term" value="F:GTPase activity"/>
    <property type="evidence" value="ECO:0000266"/>
    <property type="project" value="RGD"/>
</dbReference>
<dbReference type="GO" id="GO:0017022">
    <property type="term" value="F:myosin binding"/>
    <property type="evidence" value="ECO:0000266"/>
    <property type="project" value="RGD"/>
</dbReference>
<dbReference type="GO" id="GO:0031625">
    <property type="term" value="F:ubiquitin protein ligase binding"/>
    <property type="evidence" value="ECO:0000266"/>
    <property type="project" value="RGD"/>
</dbReference>
<dbReference type="GO" id="GO:0051301">
    <property type="term" value="P:cell division"/>
    <property type="evidence" value="ECO:0007669"/>
    <property type="project" value="UniProtKB-KW"/>
</dbReference>
<dbReference type="GO" id="GO:0072655">
    <property type="term" value="P:establishment of protein localization to mitochondrion"/>
    <property type="evidence" value="ECO:0000250"/>
    <property type="project" value="UniProtKB"/>
</dbReference>
<dbReference type="GO" id="GO:0006887">
    <property type="term" value="P:exocytosis"/>
    <property type="evidence" value="ECO:0007669"/>
    <property type="project" value="UniProtKB-KW"/>
</dbReference>
<dbReference type="GO" id="GO:0051665">
    <property type="term" value="P:membrane raft localization"/>
    <property type="evidence" value="ECO:0000250"/>
    <property type="project" value="UniProtKB"/>
</dbReference>
<dbReference type="GO" id="GO:0001843">
    <property type="term" value="P:neural tube closure"/>
    <property type="evidence" value="ECO:0000266"/>
    <property type="project" value="RGD"/>
</dbReference>
<dbReference type="GO" id="GO:0045742">
    <property type="term" value="P:positive regulation of epidermal growth factor receptor signaling pathway"/>
    <property type="evidence" value="ECO:0000266"/>
    <property type="project" value="RGD"/>
</dbReference>
<dbReference type="GO" id="GO:0051491">
    <property type="term" value="P:positive regulation of filopodium assembly"/>
    <property type="evidence" value="ECO:0000266"/>
    <property type="project" value="RGD"/>
</dbReference>
<dbReference type="GO" id="GO:0090141">
    <property type="term" value="P:positive regulation of mitochondrial fission"/>
    <property type="evidence" value="ECO:0000250"/>
    <property type="project" value="UniProtKB"/>
</dbReference>
<dbReference type="GO" id="GO:0007265">
    <property type="term" value="P:Ras protein signal transduction"/>
    <property type="evidence" value="ECO:0000266"/>
    <property type="project" value="RGD"/>
</dbReference>
<dbReference type="GO" id="GO:0031623">
    <property type="term" value="P:receptor internalization"/>
    <property type="evidence" value="ECO:0000266"/>
    <property type="project" value="RGD"/>
</dbReference>
<dbReference type="GO" id="GO:0032956">
    <property type="term" value="P:regulation of actin cytoskeleton organization"/>
    <property type="evidence" value="ECO:0000266"/>
    <property type="project" value="RGD"/>
</dbReference>
<dbReference type="GO" id="GO:0017157">
    <property type="term" value="P:regulation of exocytosis"/>
    <property type="evidence" value="ECO:0000250"/>
    <property type="project" value="UniProtKB"/>
</dbReference>
<dbReference type="GO" id="GO:0099149">
    <property type="term" value="P:regulation of postsynaptic neurotransmitter receptor internalization"/>
    <property type="evidence" value="ECO:0000314"/>
    <property type="project" value="SynGO"/>
</dbReference>
<dbReference type="CDD" id="cd04139">
    <property type="entry name" value="RalA_RalB"/>
    <property type="match status" value="1"/>
</dbReference>
<dbReference type="FunFam" id="3.40.50.300:FF:000203">
    <property type="entry name" value="Putative ras-related protein ral-a"/>
    <property type="match status" value="1"/>
</dbReference>
<dbReference type="Gene3D" id="3.40.50.300">
    <property type="entry name" value="P-loop containing nucleotide triphosphate hydrolases"/>
    <property type="match status" value="1"/>
</dbReference>
<dbReference type="InterPro" id="IPR027417">
    <property type="entry name" value="P-loop_NTPase"/>
</dbReference>
<dbReference type="InterPro" id="IPR005225">
    <property type="entry name" value="Small_GTP-bd"/>
</dbReference>
<dbReference type="InterPro" id="IPR001806">
    <property type="entry name" value="Small_GTPase"/>
</dbReference>
<dbReference type="InterPro" id="IPR020849">
    <property type="entry name" value="Small_GTPase_Ras-type"/>
</dbReference>
<dbReference type="NCBIfam" id="TIGR00231">
    <property type="entry name" value="small_GTP"/>
    <property type="match status" value="1"/>
</dbReference>
<dbReference type="PANTHER" id="PTHR24070">
    <property type="entry name" value="RAS, DI-RAS, AND RHEB FAMILY MEMBERS OF SMALL GTPASE SUPERFAMILY"/>
    <property type="match status" value="1"/>
</dbReference>
<dbReference type="Pfam" id="PF00071">
    <property type="entry name" value="Ras"/>
    <property type="match status" value="1"/>
</dbReference>
<dbReference type="PRINTS" id="PR00449">
    <property type="entry name" value="RASTRNSFRMNG"/>
</dbReference>
<dbReference type="SMART" id="SM00175">
    <property type="entry name" value="RAB"/>
    <property type="match status" value="1"/>
</dbReference>
<dbReference type="SMART" id="SM00176">
    <property type="entry name" value="RAN"/>
    <property type="match status" value="1"/>
</dbReference>
<dbReference type="SMART" id="SM00173">
    <property type="entry name" value="RAS"/>
    <property type="match status" value="1"/>
</dbReference>
<dbReference type="SMART" id="SM00174">
    <property type="entry name" value="RHO"/>
    <property type="match status" value="1"/>
</dbReference>
<dbReference type="SUPFAM" id="SSF52540">
    <property type="entry name" value="P-loop containing nucleoside triphosphate hydrolases"/>
    <property type="match status" value="1"/>
</dbReference>
<dbReference type="PROSITE" id="PS51421">
    <property type="entry name" value="RAS"/>
    <property type="match status" value="1"/>
</dbReference>
<keyword id="KW-0131">Cell cycle</keyword>
<keyword id="KW-0132">Cell division</keyword>
<keyword id="KW-1003">Cell membrane</keyword>
<keyword id="KW-0268">Exocytosis</keyword>
<keyword id="KW-0342">GTP-binding</keyword>
<keyword id="KW-0378">Hydrolase</keyword>
<keyword id="KW-0449">Lipoprotein</keyword>
<keyword id="KW-0472">Membrane</keyword>
<keyword id="KW-0488">Methylation</keyword>
<keyword id="KW-0496">Mitochondrion</keyword>
<keyword id="KW-0547">Nucleotide-binding</keyword>
<keyword id="KW-0597">Phosphoprotein</keyword>
<keyword id="KW-0636">Prenylation</keyword>
<keyword id="KW-1185">Reference proteome</keyword>
<evidence type="ECO:0000250" key="1"/>
<evidence type="ECO:0000250" key="2">
    <source>
        <dbReference type="UniProtKB" id="P11233"/>
    </source>
</evidence>
<evidence type="ECO:0000250" key="3">
    <source>
        <dbReference type="UniProtKB" id="P63321"/>
    </source>
</evidence>
<evidence type="ECO:0000269" key="4">
    <source>
    </source>
</evidence>
<evidence type="ECO:0000269" key="5">
    <source>
    </source>
</evidence>
<evidence type="ECO:0000305" key="6"/>
<reference key="1">
    <citation type="journal article" date="1993" name="Biochem. Biophys. Res. Commun.">
        <title>Isolation of cDNA clones and tissue expression of rat ral A and ral B GTP-binding proteins.</title>
        <authorList>
            <person name="Wildey G.M."/>
            <person name="Viggeswarapu M."/>
            <person name="Rim S."/>
            <person name="Denker J.K."/>
        </authorList>
    </citation>
    <scope>NUCLEOTIDE SEQUENCE [MRNA]</scope>
    <scope>TISSUE SPECIFICITY</scope>
</reference>
<reference key="2">
    <citation type="journal article" date="1995" name="Mol. Cell. Biol.">
        <title>Identification and characterization of Ral-binding protein 1, a potential downstream target of Ral GTPases.</title>
        <authorList>
            <person name="Cantor S.B."/>
            <person name="Urano T."/>
            <person name="Feig L.A."/>
        </authorList>
    </citation>
    <scope>INTERACTION WITH RALBP1 AND CDC42</scope>
    <scope>MUTAGENESIS OF ASP-49</scope>
</reference>
<organism>
    <name type="scientific">Rattus norvegicus</name>
    <name type="common">Rat</name>
    <dbReference type="NCBI Taxonomy" id="10116"/>
    <lineage>
        <taxon>Eukaryota</taxon>
        <taxon>Metazoa</taxon>
        <taxon>Chordata</taxon>
        <taxon>Craniata</taxon>
        <taxon>Vertebrata</taxon>
        <taxon>Euteleostomi</taxon>
        <taxon>Mammalia</taxon>
        <taxon>Eutheria</taxon>
        <taxon>Euarchontoglires</taxon>
        <taxon>Glires</taxon>
        <taxon>Rodentia</taxon>
        <taxon>Myomorpha</taxon>
        <taxon>Muroidea</taxon>
        <taxon>Muridae</taxon>
        <taxon>Murinae</taxon>
        <taxon>Rattus</taxon>
    </lineage>
</organism>
<comment type="function">
    <text evidence="2 3">Multifunctional GTPase involved in a variety of cellular processes including gene expression, cell migration, cell proliferation, oncogenic transformation and membrane trafficking. Accomplishes its multiple functions by interacting with distinct downstream effectors. Acts as a GTP sensor for GTP-dependent exocytosis of dense core vesicles. Key regulator of LPAR1 signaling and competes with GRK2 for binding to LPAR1 thus affecting the signaling properties of the receptor. Required for anchorage-independent proliferation of transformed cells (By similarity). The RALA-exocyst complex regulates integrin-dependent membrane raft exocytosis and growth signaling (By similarity). During mitosis, supports the stabilization and elongation of the intracellular bridge between dividing cells. Cooperates with EXOC2 to recruit other components of the exocyst to the early midbody (By similarity). During mitosis, also controls mitochondrial fission by recruiting to the mitochondrion RALBP1, which mediates the phosphorylation and activation of DNM1L by the mitotic kinase cyclin B-CDK1 (By similarity).</text>
</comment>
<comment type="catalytic activity">
    <reaction evidence="2">
        <text>GTP + H2O = GDP + phosphate + H(+)</text>
        <dbReference type="Rhea" id="RHEA:19669"/>
        <dbReference type="ChEBI" id="CHEBI:15377"/>
        <dbReference type="ChEBI" id="CHEBI:15378"/>
        <dbReference type="ChEBI" id="CHEBI:37565"/>
        <dbReference type="ChEBI" id="CHEBI:43474"/>
        <dbReference type="ChEBI" id="CHEBI:58189"/>
        <dbReference type="EC" id="3.6.5.2"/>
    </reaction>
    <physiologicalReaction direction="left-to-right" evidence="2">
        <dbReference type="Rhea" id="RHEA:19670"/>
    </physiologicalReaction>
</comment>
<comment type="activity regulation">
    <text>Alternates between an inactive form bound to GDP and an active form bound to GTP. Activated by a guanine nucleotide-exchange factor (GEF) and inactivated by a GTPase-activating protein (GAP).</text>
</comment>
<comment type="subunit">
    <text evidence="2 4">Interacts (via effector domain) with RALBP1; during mitosis, recruits RALBP1 to the mitochondrion where it promotes DNM1L phosphorylation and mitochondrial fission (PubMed:7623849). Interacts with EXOC2/Sec5 and EXOC8/Exo84; binding to EXOC2 and EXOC8 is mutually exclusive. Interacts with Clostridium exoenzyme C3. Interacts with RALGPS1. Interacts with LPAR1 and LPAR2. Interacts with GRK2 in response to LPAR1 activation. RALA and GRK2 binding to LPAR1 is mutually exclusive (By similarity). Interacts with CDC42 (PubMed:7623849).</text>
</comment>
<comment type="subcellular location">
    <subcellularLocation>
        <location evidence="2">Cell membrane</location>
        <topology evidence="2">Lipid-anchor</topology>
        <orientation evidence="2">Cytoplasmic side</orientation>
    </subcellularLocation>
    <subcellularLocation>
        <location evidence="2">Cleavage furrow</location>
    </subcellularLocation>
    <subcellularLocation>
        <location evidence="2">Midbody</location>
        <location evidence="2">Midbody ring</location>
    </subcellularLocation>
    <subcellularLocation>
        <location evidence="2">Mitochondrion</location>
    </subcellularLocation>
    <text evidence="2">Predominantly at the cell surface in the absence of LPA. In the presence of LPA, colocalizes with LPAR1 and LPAR2 in endocytic vesicles. May colocalize with CNTRL/centriolin at the midbody ring. However, localization at the midbody at late cytokinesis was not confirmed. Relocalizes to the mitochondrion during mitosis where it regulates mitochondrial fission.</text>
</comment>
<comment type="tissue specificity">
    <text evidence="5">Higher levels where found in testes followed by brain, adrenal gland, pituitary gland, ovary, liver and kidney. Low expression was found in muscle.</text>
</comment>
<comment type="PTM">
    <text evidence="2">Prenylation is essential for membrane localization.</text>
</comment>
<comment type="PTM">
    <text evidence="2">Phosphorylated. Phosphorylation at Ser-194 by AURKA/Aurora kinase A, during mitosis, induces RALA localization to the mitochondrion where it regulates mitochondrial fission.</text>
</comment>
<comment type="similarity">
    <text evidence="6">Belongs to the small GTPase superfamily. Ras family.</text>
</comment>
<proteinExistence type="evidence at protein level"/>